<name>ROS1C_ORYSJ</name>
<feature type="chain" id="PRO_0000445980" description="Protein ROS1C">
    <location>
        <begin position="1"/>
        <end position="1858"/>
    </location>
</feature>
<feature type="region of interest" description="Disordered" evidence="2">
    <location>
        <begin position="347"/>
        <end position="416"/>
    </location>
</feature>
<feature type="region of interest" description="Disordered" evidence="2">
    <location>
        <begin position="1288"/>
        <end position="1309"/>
    </location>
</feature>
<feature type="compositionally biased region" description="Basic and acidic residues" evidence="2">
    <location>
        <begin position="347"/>
        <end position="356"/>
    </location>
</feature>
<feature type="compositionally biased region" description="Basic residues" evidence="2">
    <location>
        <begin position="360"/>
        <end position="370"/>
    </location>
</feature>
<feature type="compositionally biased region" description="Basic residues" evidence="2">
    <location>
        <begin position="394"/>
        <end position="404"/>
    </location>
</feature>
<feature type="binding site" evidence="1">
    <location>
        <position position="1492"/>
    </location>
    <ligand>
        <name>[4Fe-4S] cluster</name>
        <dbReference type="ChEBI" id="CHEBI:49883"/>
    </ligand>
</feature>
<feature type="binding site" evidence="1">
    <location>
        <position position="1499"/>
    </location>
    <ligand>
        <name>[4Fe-4S] cluster</name>
        <dbReference type="ChEBI" id="CHEBI:49883"/>
    </ligand>
</feature>
<feature type="binding site" evidence="1">
    <location>
        <position position="1502"/>
    </location>
    <ligand>
        <name>[4Fe-4S] cluster</name>
        <dbReference type="ChEBI" id="CHEBI:49883"/>
    </ligand>
</feature>
<feature type="binding site" evidence="1">
    <location>
        <position position="1508"/>
    </location>
    <ligand>
        <name>[4Fe-4S] cluster</name>
        <dbReference type="ChEBI" id="CHEBI:49883"/>
    </ligand>
</feature>
<feature type="sequence conflict" description="In Ref. 5; EEE63898." evidence="7" ref="5">
    <location>
        <position position="187"/>
    </location>
</feature>
<organism>
    <name type="scientific">Oryza sativa subsp. japonica</name>
    <name type="common">Rice</name>
    <dbReference type="NCBI Taxonomy" id="39947"/>
    <lineage>
        <taxon>Eukaryota</taxon>
        <taxon>Viridiplantae</taxon>
        <taxon>Streptophyta</taxon>
        <taxon>Embryophyta</taxon>
        <taxon>Tracheophyta</taxon>
        <taxon>Spermatophyta</taxon>
        <taxon>Magnoliopsida</taxon>
        <taxon>Liliopsida</taxon>
        <taxon>Poales</taxon>
        <taxon>Poaceae</taxon>
        <taxon>BOP clade</taxon>
        <taxon>Oryzoideae</taxon>
        <taxon>Oryzeae</taxon>
        <taxon>Oryzinae</taxon>
        <taxon>Oryza</taxon>
        <taxon>Oryza sativa</taxon>
    </lineage>
</organism>
<dbReference type="EC" id="3.2.2.-" evidence="7"/>
<dbReference type="EMBL" id="AC137004">
    <property type="protein sequence ID" value="AAU44279.1"/>
    <property type="status" value="ALT_SEQ"/>
    <property type="molecule type" value="Genomic_DNA"/>
</dbReference>
<dbReference type="EMBL" id="AP008211">
    <property type="protein sequence ID" value="BAF17599.1"/>
    <property type="status" value="ALT_SEQ"/>
    <property type="molecule type" value="Genomic_DNA"/>
</dbReference>
<dbReference type="EMBL" id="AP014961">
    <property type="protein sequence ID" value="BAS94281.1"/>
    <property type="status" value="ALT_SEQ"/>
    <property type="molecule type" value="Genomic_DNA"/>
</dbReference>
<dbReference type="EMBL" id="AP014961">
    <property type="protein sequence ID" value="BAS94282.1"/>
    <property type="status" value="ALT_SEQ"/>
    <property type="molecule type" value="Genomic_DNA"/>
</dbReference>
<dbReference type="EMBL" id="CM000142">
    <property type="protein sequence ID" value="EEE63898.1"/>
    <property type="molecule type" value="Genomic_DNA"/>
</dbReference>
<dbReference type="EMBL" id="FJ536320">
    <property type="protein sequence ID" value="ACL80319.1"/>
    <property type="molecule type" value="mRNA"/>
</dbReference>
<dbReference type="RefSeq" id="XP_015640367.1">
    <property type="nucleotide sequence ID" value="XM_015784881.1"/>
</dbReference>
<dbReference type="SMR" id="B8YIE8"/>
<dbReference type="FunCoup" id="B8YIE8">
    <property type="interactions" value="20"/>
</dbReference>
<dbReference type="PaxDb" id="39947-B8YIE8"/>
<dbReference type="KEGG" id="dosa:Os05g0445900"/>
<dbReference type="eggNOG" id="ENOG502QQKH">
    <property type="taxonomic scope" value="Eukaryota"/>
</dbReference>
<dbReference type="HOGENOM" id="CLU_008319_0_0_1"/>
<dbReference type="InParanoid" id="B8YIE8"/>
<dbReference type="OrthoDB" id="5607at2759"/>
<dbReference type="Proteomes" id="UP000000763">
    <property type="component" value="Chromosome 5"/>
</dbReference>
<dbReference type="Proteomes" id="UP000007752">
    <property type="component" value="Chromosome 5"/>
</dbReference>
<dbReference type="Proteomes" id="UP000059680">
    <property type="component" value="Chromosome 5"/>
</dbReference>
<dbReference type="GO" id="GO:0005634">
    <property type="term" value="C:nucleus"/>
    <property type="evidence" value="ECO:0007669"/>
    <property type="project" value="UniProtKB-SubCell"/>
</dbReference>
<dbReference type="GO" id="GO:0051539">
    <property type="term" value="F:4 iron, 4 sulfur cluster binding"/>
    <property type="evidence" value="ECO:0007669"/>
    <property type="project" value="InterPro"/>
</dbReference>
<dbReference type="GO" id="GO:0051747">
    <property type="term" value="F:cytosine C-5 DNA demethylase activity"/>
    <property type="evidence" value="ECO:0000315"/>
    <property type="project" value="CACAO"/>
</dbReference>
<dbReference type="GO" id="GO:0003677">
    <property type="term" value="F:DNA binding"/>
    <property type="evidence" value="ECO:0007669"/>
    <property type="project" value="UniProtKB-KW"/>
</dbReference>
<dbReference type="GO" id="GO:0019104">
    <property type="term" value="F:DNA N-glycosylase activity"/>
    <property type="evidence" value="ECO:0007669"/>
    <property type="project" value="InterPro"/>
</dbReference>
<dbReference type="GO" id="GO:0016829">
    <property type="term" value="F:lyase activity"/>
    <property type="evidence" value="ECO:0007669"/>
    <property type="project" value="UniProtKB-KW"/>
</dbReference>
<dbReference type="GO" id="GO:0046872">
    <property type="term" value="F:metal ion binding"/>
    <property type="evidence" value="ECO:0007669"/>
    <property type="project" value="UniProtKB-KW"/>
</dbReference>
<dbReference type="GO" id="GO:0006284">
    <property type="term" value="P:base-excision repair"/>
    <property type="evidence" value="ECO:0007669"/>
    <property type="project" value="InterPro"/>
</dbReference>
<dbReference type="GO" id="GO:0141169">
    <property type="term" value="P:chromosomal 5-methylcytosine DNA demethylation, direct 5-methylcytosine excision pathway"/>
    <property type="evidence" value="ECO:0000314"/>
    <property type="project" value="UniProtKB"/>
</dbReference>
<dbReference type="CDD" id="cd00056">
    <property type="entry name" value="ENDO3c"/>
    <property type="match status" value="1"/>
</dbReference>
<dbReference type="FunFam" id="1.10.1670.10:FF:000004">
    <property type="entry name" value="DNA glycosylase/AP lyase ROS1"/>
    <property type="match status" value="1"/>
</dbReference>
<dbReference type="Gene3D" id="1.10.1670.10">
    <property type="entry name" value="Helix-hairpin-Helix base-excision DNA repair enzymes (C-terminal)"/>
    <property type="match status" value="1"/>
</dbReference>
<dbReference type="Gene3D" id="1.10.340.30">
    <property type="entry name" value="Hypothetical protein, domain 2"/>
    <property type="match status" value="1"/>
</dbReference>
<dbReference type="InterPro" id="IPR044811">
    <property type="entry name" value="DME/ROS1"/>
</dbReference>
<dbReference type="InterPro" id="IPR011257">
    <property type="entry name" value="DNA_glycosylase"/>
</dbReference>
<dbReference type="InterPro" id="IPR003651">
    <property type="entry name" value="Endonuclease3_FeS-loop_motif"/>
</dbReference>
<dbReference type="InterPro" id="IPR003265">
    <property type="entry name" value="HhH-GPD_domain"/>
</dbReference>
<dbReference type="InterPro" id="IPR023170">
    <property type="entry name" value="HhH_base_excis_C"/>
</dbReference>
<dbReference type="InterPro" id="IPR028925">
    <property type="entry name" value="RRM_DME"/>
</dbReference>
<dbReference type="PANTHER" id="PTHR46213:SF2">
    <property type="entry name" value="PROTEIN ROS1C"/>
    <property type="match status" value="1"/>
</dbReference>
<dbReference type="PANTHER" id="PTHR46213">
    <property type="entry name" value="TRANSCRIPTIONAL ACTIVATOR DEMETER"/>
    <property type="match status" value="1"/>
</dbReference>
<dbReference type="Pfam" id="PF15628">
    <property type="entry name" value="RRM_DME"/>
    <property type="match status" value="1"/>
</dbReference>
<dbReference type="SMART" id="SM00478">
    <property type="entry name" value="ENDO3c"/>
    <property type="match status" value="1"/>
</dbReference>
<dbReference type="SMART" id="SM00525">
    <property type="entry name" value="FES"/>
    <property type="match status" value="1"/>
</dbReference>
<dbReference type="SUPFAM" id="SSF48150">
    <property type="entry name" value="DNA-glycosylase"/>
    <property type="match status" value="1"/>
</dbReference>
<protein>
    <recommendedName>
        <fullName evidence="6">Protein ROS1C</fullName>
        <ecNumber evidence="7">3.2.2.-</ecNumber>
    </recommendedName>
    <alternativeName>
        <fullName evidence="5">DNA glycosylase 701</fullName>
    </alternativeName>
    <alternativeName>
        <fullName evidence="7">Protein REPRESSOR OF SILENCING 1 homolog c</fullName>
    </alternativeName>
</protein>
<comment type="function">
    <text evidence="3">Bifunctional DNA glycosylase/lyase, which excises 5-methylcytosine (5-meC) and 5-hydroxymethylcytosine (5-hmeC), leaving an apyrimidinic (AP) site that is subsequently incised by the lyase activity (PubMed:21896764). Is responsible for the demethylation of methylated cytosine residues of Tos17 retrotransposon DNA (PubMed:21896764). Demethylation of Tos17 cytosine residues promotes its transposition (PubMed:21896764). May be involved in seed development (PubMed:21896764).</text>
</comment>
<comment type="cofactor">
    <cofactor evidence="1">
        <name>[4Fe-4S] cluster</name>
        <dbReference type="ChEBI" id="CHEBI:49883"/>
    </cofactor>
    <text evidence="1">Binds 1 [4Fe-4S] cluster. The cluster does not appear to play a role in catalysis, but is probably involved in the proper positioning of the enzyme along the DNA strand.</text>
</comment>
<comment type="subcellular location">
    <subcellularLocation>
        <location evidence="3">Nucleus</location>
    </subcellularLocation>
</comment>
<comment type="tissue specificity">
    <text evidence="4">Expressed in pistils and immature seeds (PubMed:22448681). Expressed a low levels in roots, leaves and anthers (PubMed:22448681).</text>
</comment>
<comment type="disruption phenotype">
    <text evidence="3">Increased number of wrinkled seeds (PubMed:21896764). Hypermethylation of cytosine residues in the DNA sequence of Tos17 retrotransposons (PubMed:21896764).</text>
</comment>
<comment type="similarity">
    <text evidence="7">Belongs to the DNA glycosylase family. DEMETER subfamily.</text>
</comment>
<comment type="sequence caution" evidence="7">
    <conflict type="erroneous gene model prediction">
        <sequence resource="EMBL-CDS" id="AAU44279"/>
    </conflict>
</comment>
<comment type="sequence caution" evidence="7">
    <conflict type="erroneous gene model prediction">
        <sequence resource="EMBL-CDS" id="BAF17599"/>
    </conflict>
</comment>
<comment type="sequence caution" evidence="7">
    <conflict type="erroneous gene model prediction">
        <sequence resource="EMBL-CDS" id="BAS94281"/>
    </conflict>
</comment>
<comment type="sequence caution" evidence="7">
    <conflict type="erroneous gene model prediction">
        <sequence resource="EMBL-CDS" id="BAS94282"/>
    </conflict>
</comment>
<keyword id="KW-0238">DNA-binding</keyword>
<keyword id="KW-0378">Hydrolase</keyword>
<keyword id="KW-0408">Iron</keyword>
<keyword id="KW-0411">Iron-sulfur</keyword>
<keyword id="KW-0456">Lyase</keyword>
<keyword id="KW-0479">Metal-binding</keyword>
<keyword id="KW-0539">Nucleus</keyword>
<keyword id="KW-1185">Reference proteome</keyword>
<sequence length="1858" mass="207157">MAKDENPSYLHLIFLSSRIRVFILDPPLSLPLSHGQCELQVVEEAAMDPSGLNLQGNPAENQESWTSGVSVGRGTPNLGVGTAVAGRSCPSSTLFPGSSLSSTALLNTMHEGSFPQTALVAGSVSSADEQHGAPPVRPSYNLPAGCTQVPISILVFHRRLTGRGSRCRSPQSRSFMPAPALSGVSEADGAYGPIPQSDFLSLRGPSEVFPGDMAMNHSEPATSYGYNSEYAPMHLQPNGLYTEASNTESEREASQLQQSAEAVICDSLSKLESAMEKIQGQNPQESSGLVAEGSADDNIHKYHQKAKRARTQITHSDKIDLPTQAVSACKEKTITQIEMQIADAERTEALKGEDAPAQKLKTRRRKHRPKVIREDRPAKKQMATTSEEKPLNQKPKRKYVRKNRNPSSLEKCAEPFSDHSISRESRTTVRSSIASVRRRLQFEFGEHGVQRDQSSMTNSWYQNQEKPVNAESSLCSVTKSSVQVEHGQELHMENSPEGLFFGINSKLNKILDEYIHLPEAAPKPSEQIPLAASGHVSEELARKQYDVRHTHDPDSTSYNIERSGLITTKGHKKDLDLNYSNTNGFQMYCSASLLPEMDSTKGSMTKVSKMDKNKKRHYGGESSLAGTQSSIIMRTAAEMLAVYQACGIKKKRSARVRRNSFLSVMDLEKNTSQESTRLPRSCMEALYESSYIKFMTKKRSQKARLNSPNSIQPNIDQKNRFSSETVFSGGFNGLKRSEETFQKTLPQIPDDKRINLDIHCKVPVESSPNTSTPPYMDYLQGVTSKFRYFDLNTEQVHKTEMHLSQTMPSLSSLGATNYLPNALVPYVGGAVVPYQTQFHLVKKQRPRAKVDLDFETTRVWNLLMGKAADPVDGTDVDKERWWKQEREVFQGRANSFIARMRLVQGDRRFSPWKGSVVDSVVGVFLTQNVADHLSSSAYMALAASFPTGSHGNCNDGIAGQDNEEIISTSAVGDRGTFEFFYNGSRPDIGLNFEFSMACEKIHMEPKDNTTVNELTKGENYSLHCKESAGSLCDHETEIDHKAKSISDFSAVELTACMKNLHATQFQKEISLSQSVVTSESILQPGLPLSSGMDHARRNFVGSISDTASQQVGSNFDDGKSLTGNDVTANETEYHGIKAAATNNYVVDEPGIPSGSSLYPFFSAIDCHQLDGRNDTHVSSTSPNCSICSASSNFKIGTIEENSSLFMPFDAHLAQRNGNMIVDTNLSSALESTELPVKLLHCGKRSCYEASEFQDHESLYATGGVIPETATKADDSTLKSGFASFNGLPDTAAQASKPKKSRTTSKKNSENFDWDKLRRQACGNYQMKERIFDRRDSVDWEAVRCADVQRISHAIRERGMNNVLAERIQKFLNRLVTDHGSIDLEWLRDVPPDSAKDYLLSIRGLGLKSVECVRLLTLHHLAFPVDTNVGRICVRLGWVPIQPLPESLQLHLLELYPVLETIQKYLWPRLCKLDQQTLYELHYQMITFGKVFCTKSKPNCNACPMRSECRHFASAFASARLALPSPQDKRLVNLSNQFAFHNGTMPTPNSTPLPQLEGSIHARDVHANNTNPIIEEPASPREEECRELLENDIEDFDEDTDEIPIIKLNMEAFSQNLENCIKESNKDFQSDDITKALVAISNEAASIPVPKLKNVHRLRTEHYVYELPDSHPLMQQLALDQREPDDPSPYLLAIWTPDELKDTREAPKPCCNPQTEGGLCSNEMCHNCVSERENQYRYVRGTVLVPCRTAMRGSFPLNGTYFQVNEVFADHSSSHNPINIPREQLWNLHRRMVYFGTSVPTIFKGLTTEEIQHCFWRGFVCVRGFNMETRAPRPLCPHFHLAASKLRRSSKKAATEQTH</sequence>
<accession>B8YIE8</accession>
<accession>A0A0P0WMX3</accession>
<accession>B9FPV3</accession>
<accession>Q0DHS4</accession>
<accession>Q65WT4</accession>
<reference key="1">
    <citation type="journal article" date="2005" name="Mol. Genet. Genomics">
        <title>A fine physical map of the rice chromosome 5.</title>
        <authorList>
            <person name="Cheng C.-H."/>
            <person name="Chung M.C."/>
            <person name="Liu S.-M."/>
            <person name="Chen S.-K."/>
            <person name="Kao F.Y."/>
            <person name="Lin S.-J."/>
            <person name="Hsiao S.-H."/>
            <person name="Tseng I.C."/>
            <person name="Hsing Y.-I.C."/>
            <person name="Wu H.-P."/>
            <person name="Chen C.-S."/>
            <person name="Shaw J.-F."/>
            <person name="Wu J."/>
            <person name="Matsumoto T."/>
            <person name="Sasaki T."/>
            <person name="Chen H.-C."/>
            <person name="Chow T.-Y."/>
        </authorList>
    </citation>
    <scope>NUCLEOTIDE SEQUENCE [LARGE SCALE GENOMIC DNA]</scope>
    <source>
        <strain>cv. Nipponbare</strain>
    </source>
</reference>
<reference key="2">
    <citation type="journal article" date="2005" name="Nature">
        <title>The map-based sequence of the rice genome.</title>
        <authorList>
            <consortium name="International rice genome sequencing project (IRGSP)"/>
        </authorList>
    </citation>
    <scope>NUCLEOTIDE SEQUENCE [LARGE SCALE GENOMIC DNA]</scope>
    <source>
        <strain>cv. Nipponbare</strain>
    </source>
</reference>
<reference key="3">
    <citation type="journal article" date="2008" name="Nucleic Acids Res.">
        <title>The rice annotation project database (RAP-DB): 2008 update.</title>
        <authorList>
            <consortium name="The rice annotation project (RAP)"/>
        </authorList>
    </citation>
    <scope>GENOME REANNOTATION</scope>
    <source>
        <strain>cv. Nipponbare</strain>
    </source>
</reference>
<reference key="4">
    <citation type="journal article" date="2013" name="Rice">
        <title>Improvement of the Oryza sativa Nipponbare reference genome using next generation sequence and optical map data.</title>
        <authorList>
            <person name="Kawahara Y."/>
            <person name="de la Bastide M."/>
            <person name="Hamilton J.P."/>
            <person name="Kanamori H."/>
            <person name="McCombie W.R."/>
            <person name="Ouyang S."/>
            <person name="Schwartz D.C."/>
            <person name="Tanaka T."/>
            <person name="Wu J."/>
            <person name="Zhou S."/>
            <person name="Childs K.L."/>
            <person name="Davidson R.M."/>
            <person name="Lin H."/>
            <person name="Quesada-Ocampo L."/>
            <person name="Vaillancourt B."/>
            <person name="Sakai H."/>
            <person name="Lee S.S."/>
            <person name="Kim J."/>
            <person name="Numa H."/>
            <person name="Itoh T."/>
            <person name="Buell C.R."/>
            <person name="Matsumoto T."/>
        </authorList>
    </citation>
    <scope>GENOME REANNOTATION</scope>
    <source>
        <strain>cv. Nipponbare</strain>
    </source>
</reference>
<reference key="5">
    <citation type="journal article" date="2005" name="PLoS Biol.">
        <title>The genomes of Oryza sativa: a history of duplications.</title>
        <authorList>
            <person name="Yu J."/>
            <person name="Wang J."/>
            <person name="Lin W."/>
            <person name="Li S."/>
            <person name="Li H."/>
            <person name="Zhou J."/>
            <person name="Ni P."/>
            <person name="Dong W."/>
            <person name="Hu S."/>
            <person name="Zeng C."/>
            <person name="Zhang J."/>
            <person name="Zhang Y."/>
            <person name="Li R."/>
            <person name="Xu Z."/>
            <person name="Li S."/>
            <person name="Li X."/>
            <person name="Zheng H."/>
            <person name="Cong L."/>
            <person name="Lin L."/>
            <person name="Yin J."/>
            <person name="Geng J."/>
            <person name="Li G."/>
            <person name="Shi J."/>
            <person name="Liu J."/>
            <person name="Lv H."/>
            <person name="Li J."/>
            <person name="Wang J."/>
            <person name="Deng Y."/>
            <person name="Ran L."/>
            <person name="Shi X."/>
            <person name="Wang X."/>
            <person name="Wu Q."/>
            <person name="Li C."/>
            <person name="Ren X."/>
            <person name="Wang J."/>
            <person name="Wang X."/>
            <person name="Li D."/>
            <person name="Liu D."/>
            <person name="Zhang X."/>
            <person name="Ji Z."/>
            <person name="Zhao W."/>
            <person name="Sun Y."/>
            <person name="Zhang Z."/>
            <person name="Bao J."/>
            <person name="Han Y."/>
            <person name="Dong L."/>
            <person name="Ji J."/>
            <person name="Chen P."/>
            <person name="Wu S."/>
            <person name="Liu J."/>
            <person name="Xiao Y."/>
            <person name="Bu D."/>
            <person name="Tan J."/>
            <person name="Yang L."/>
            <person name="Ye C."/>
            <person name="Zhang J."/>
            <person name="Xu J."/>
            <person name="Zhou Y."/>
            <person name="Yu Y."/>
            <person name="Zhang B."/>
            <person name="Zhuang S."/>
            <person name="Wei H."/>
            <person name="Liu B."/>
            <person name="Lei M."/>
            <person name="Yu H."/>
            <person name="Li Y."/>
            <person name="Xu H."/>
            <person name="Wei S."/>
            <person name="He X."/>
            <person name="Fang L."/>
            <person name="Zhang Z."/>
            <person name="Zhang Y."/>
            <person name="Huang X."/>
            <person name="Su Z."/>
            <person name="Tong W."/>
            <person name="Li J."/>
            <person name="Tong Z."/>
            <person name="Li S."/>
            <person name="Ye J."/>
            <person name="Wang L."/>
            <person name="Fang L."/>
            <person name="Lei T."/>
            <person name="Chen C.-S."/>
            <person name="Chen H.-C."/>
            <person name="Xu Z."/>
            <person name="Li H."/>
            <person name="Huang H."/>
            <person name="Zhang F."/>
            <person name="Xu H."/>
            <person name="Li N."/>
            <person name="Zhao C."/>
            <person name="Li S."/>
            <person name="Dong L."/>
            <person name="Huang Y."/>
            <person name="Li L."/>
            <person name="Xi Y."/>
            <person name="Qi Q."/>
            <person name="Li W."/>
            <person name="Zhang B."/>
            <person name="Hu W."/>
            <person name="Zhang Y."/>
            <person name="Tian X."/>
            <person name="Jiao Y."/>
            <person name="Liang X."/>
            <person name="Jin J."/>
            <person name="Gao L."/>
            <person name="Zheng W."/>
            <person name="Hao B."/>
            <person name="Liu S.-M."/>
            <person name="Wang W."/>
            <person name="Yuan L."/>
            <person name="Cao M."/>
            <person name="McDermott J."/>
            <person name="Samudrala R."/>
            <person name="Wang J."/>
            <person name="Wong G.K.-S."/>
            <person name="Yang H."/>
        </authorList>
    </citation>
    <scope>NUCLEOTIDE SEQUENCE [LARGE SCALE GENOMIC DNA]</scope>
    <source>
        <strain>cv. Nipponbare</strain>
    </source>
</reference>
<reference key="6">
    <citation type="journal article" date="2011" name="Proc. Natl. Acad. Sci. U.S.A.">
        <title>A 5-methylcytosine DNA glycosylase/lyase demethylates the retrotransposon Tos17 and promotes its transposition in rice.</title>
        <authorList>
            <person name="La H."/>
            <person name="Ding B."/>
            <person name="Mishra G.P."/>
            <person name="Zhou B."/>
            <person name="Yang H."/>
            <person name="Bellizzi Mdel R."/>
            <person name="Chen S."/>
            <person name="Meyers B.C."/>
            <person name="Peng Z."/>
            <person name="Zhu J.K."/>
            <person name="Wang G.L."/>
        </authorList>
    </citation>
    <scope>NUCLEOTIDE SEQUENCE [MRNA] OF 47-1858</scope>
    <scope>FUNCTION</scope>
    <scope>SUBCELLULAR LOCATION</scope>
    <scope>DISRUPTION PHENOTYPE</scope>
</reference>
<reference key="7">
    <citation type="journal article" date="2012" name="Plant J.">
        <title>A null mutation of ROS1a for DNA demethylation in rice is not transmittable to progeny.</title>
        <authorList>
            <person name="Ono A."/>
            <person name="Yamaguchi K."/>
            <person name="Fukada-Tanaka S."/>
            <person name="Terada R."/>
            <person name="Mitsui T."/>
            <person name="Iida S."/>
        </authorList>
    </citation>
    <scope>TISSUE SPECIFICITY</scope>
</reference>
<gene>
    <name evidence="6" type="primary">ROS1C</name>
    <name evidence="5" type="synonym">DNG701</name>
    <name evidence="9" type="ordered locus">Os05g0445900</name>
    <name evidence="7" type="ordered locus">LOC_Os05g37350</name>
    <name evidence="10" type="ORF">OsJ_18723</name>
    <name evidence="8" type="ORF">P0615D12.11</name>
</gene>
<proteinExistence type="evidence at transcript level"/>
<evidence type="ECO:0000250" key="1">
    <source>
        <dbReference type="UniProtKB" id="P0AB83"/>
    </source>
</evidence>
<evidence type="ECO:0000256" key="2">
    <source>
        <dbReference type="SAM" id="MobiDB-lite"/>
    </source>
</evidence>
<evidence type="ECO:0000269" key="3">
    <source>
    </source>
</evidence>
<evidence type="ECO:0000269" key="4">
    <source>
    </source>
</evidence>
<evidence type="ECO:0000303" key="5">
    <source>
    </source>
</evidence>
<evidence type="ECO:0000303" key="6">
    <source>
    </source>
</evidence>
<evidence type="ECO:0000305" key="7"/>
<evidence type="ECO:0000312" key="8">
    <source>
        <dbReference type="EMBL" id="AAU44279.1"/>
    </source>
</evidence>
<evidence type="ECO:0000312" key="9">
    <source>
        <dbReference type="EMBL" id="BAF17599.1"/>
    </source>
</evidence>
<evidence type="ECO:0000312" key="10">
    <source>
        <dbReference type="EMBL" id="EEE63898.1"/>
    </source>
</evidence>